<proteinExistence type="inferred from homology"/>
<sequence>MSQFKTGSRADCIGPARGSNFGPMSHSAVPATEVVIAADCWRSEASAEATVLRAIEAAAAMVDADTGEAELAVMLTDDDGIRALNASYRGQDKPTNVLSFPAPQPDYQGAAQGSDVAPKLLGDIAIAYQTVRREADDEGKRFDHHLSHLAVHGFLHLVGYDHETDAEAETMEAAERRILAGLGIPDPYADQDRVS</sequence>
<comment type="function">
    <text evidence="1">Single strand-specific metallo-endoribonuclease involved in late-stage 70S ribosome quality control and in maturation of the 3' terminus of the 16S rRNA.</text>
</comment>
<comment type="cofactor">
    <cofactor evidence="1">
        <name>Zn(2+)</name>
        <dbReference type="ChEBI" id="CHEBI:29105"/>
    </cofactor>
    <text evidence="1">Binds 1 zinc ion.</text>
</comment>
<comment type="subcellular location">
    <subcellularLocation>
        <location evidence="1">Cytoplasm</location>
    </subcellularLocation>
</comment>
<comment type="similarity">
    <text evidence="1">Belongs to the endoribonuclease YbeY family.</text>
</comment>
<reference key="1">
    <citation type="submission" date="2006-01" db="EMBL/GenBank/DDBJ databases">
        <title>Complete sequence of Rhodopseudomonas palustris HaA2.</title>
        <authorList>
            <consortium name="US DOE Joint Genome Institute"/>
            <person name="Copeland A."/>
            <person name="Lucas S."/>
            <person name="Lapidus A."/>
            <person name="Barry K."/>
            <person name="Detter J.C."/>
            <person name="Glavina T."/>
            <person name="Hammon N."/>
            <person name="Israni S."/>
            <person name="Pitluck S."/>
            <person name="Chain P."/>
            <person name="Malfatti S."/>
            <person name="Shin M."/>
            <person name="Vergez L."/>
            <person name="Schmutz J."/>
            <person name="Larimer F."/>
            <person name="Land M."/>
            <person name="Hauser L."/>
            <person name="Pelletier D.A."/>
            <person name="Kyrpides N."/>
            <person name="Anderson I."/>
            <person name="Oda Y."/>
            <person name="Harwood C.S."/>
            <person name="Richardson P."/>
        </authorList>
    </citation>
    <scope>NUCLEOTIDE SEQUENCE [LARGE SCALE GENOMIC DNA]</scope>
    <source>
        <strain>HaA2</strain>
    </source>
</reference>
<accession>Q2J2K7</accession>
<protein>
    <recommendedName>
        <fullName evidence="1">Endoribonuclease YbeY</fullName>
        <ecNumber evidence="1">3.1.-.-</ecNumber>
    </recommendedName>
</protein>
<evidence type="ECO:0000255" key="1">
    <source>
        <dbReference type="HAMAP-Rule" id="MF_00009"/>
    </source>
</evidence>
<dbReference type="EC" id="3.1.-.-" evidence="1"/>
<dbReference type="EMBL" id="CP000250">
    <property type="protein sequence ID" value="ABD05303.1"/>
    <property type="molecule type" value="Genomic_DNA"/>
</dbReference>
<dbReference type="SMR" id="Q2J2K7"/>
<dbReference type="STRING" id="316058.RPB_0592"/>
<dbReference type="KEGG" id="rpb:RPB_0592"/>
<dbReference type="eggNOG" id="COG0319">
    <property type="taxonomic scope" value="Bacteria"/>
</dbReference>
<dbReference type="HOGENOM" id="CLU_106710_0_0_5"/>
<dbReference type="Proteomes" id="UP000008809">
    <property type="component" value="Chromosome"/>
</dbReference>
<dbReference type="GO" id="GO:0005737">
    <property type="term" value="C:cytoplasm"/>
    <property type="evidence" value="ECO:0007669"/>
    <property type="project" value="UniProtKB-SubCell"/>
</dbReference>
<dbReference type="GO" id="GO:0004222">
    <property type="term" value="F:metalloendopeptidase activity"/>
    <property type="evidence" value="ECO:0007669"/>
    <property type="project" value="InterPro"/>
</dbReference>
<dbReference type="GO" id="GO:0004521">
    <property type="term" value="F:RNA endonuclease activity"/>
    <property type="evidence" value="ECO:0007669"/>
    <property type="project" value="UniProtKB-UniRule"/>
</dbReference>
<dbReference type="GO" id="GO:0008270">
    <property type="term" value="F:zinc ion binding"/>
    <property type="evidence" value="ECO:0007669"/>
    <property type="project" value="UniProtKB-UniRule"/>
</dbReference>
<dbReference type="GO" id="GO:0006364">
    <property type="term" value="P:rRNA processing"/>
    <property type="evidence" value="ECO:0007669"/>
    <property type="project" value="UniProtKB-UniRule"/>
</dbReference>
<dbReference type="Gene3D" id="3.40.390.30">
    <property type="entry name" value="Metalloproteases ('zincins'), catalytic domain"/>
    <property type="match status" value="1"/>
</dbReference>
<dbReference type="HAMAP" id="MF_00009">
    <property type="entry name" value="Endoribonucl_YbeY"/>
    <property type="match status" value="1"/>
</dbReference>
<dbReference type="InterPro" id="IPR023091">
    <property type="entry name" value="MetalPrtase_cat_dom_sf_prd"/>
</dbReference>
<dbReference type="InterPro" id="IPR002036">
    <property type="entry name" value="YbeY"/>
</dbReference>
<dbReference type="InterPro" id="IPR020549">
    <property type="entry name" value="YbeY_CS"/>
</dbReference>
<dbReference type="NCBIfam" id="TIGR00043">
    <property type="entry name" value="rRNA maturation RNase YbeY"/>
    <property type="match status" value="1"/>
</dbReference>
<dbReference type="PANTHER" id="PTHR46986">
    <property type="entry name" value="ENDORIBONUCLEASE YBEY, CHLOROPLASTIC"/>
    <property type="match status" value="1"/>
</dbReference>
<dbReference type="PANTHER" id="PTHR46986:SF1">
    <property type="entry name" value="ENDORIBONUCLEASE YBEY, CHLOROPLASTIC"/>
    <property type="match status" value="1"/>
</dbReference>
<dbReference type="Pfam" id="PF02130">
    <property type="entry name" value="YbeY"/>
    <property type="match status" value="1"/>
</dbReference>
<dbReference type="SUPFAM" id="SSF55486">
    <property type="entry name" value="Metalloproteases ('zincins'), catalytic domain"/>
    <property type="match status" value="1"/>
</dbReference>
<dbReference type="PROSITE" id="PS01306">
    <property type="entry name" value="UPF0054"/>
    <property type="match status" value="1"/>
</dbReference>
<gene>
    <name evidence="1" type="primary">ybeY</name>
    <name type="ordered locus">RPB_0592</name>
</gene>
<keyword id="KW-0963">Cytoplasm</keyword>
<keyword id="KW-0255">Endonuclease</keyword>
<keyword id="KW-0378">Hydrolase</keyword>
<keyword id="KW-0479">Metal-binding</keyword>
<keyword id="KW-0540">Nuclease</keyword>
<keyword id="KW-1185">Reference proteome</keyword>
<keyword id="KW-0690">Ribosome biogenesis</keyword>
<keyword id="KW-0698">rRNA processing</keyword>
<keyword id="KW-0862">Zinc</keyword>
<organism>
    <name type="scientific">Rhodopseudomonas palustris (strain HaA2)</name>
    <dbReference type="NCBI Taxonomy" id="316058"/>
    <lineage>
        <taxon>Bacteria</taxon>
        <taxon>Pseudomonadati</taxon>
        <taxon>Pseudomonadota</taxon>
        <taxon>Alphaproteobacteria</taxon>
        <taxon>Hyphomicrobiales</taxon>
        <taxon>Nitrobacteraceae</taxon>
        <taxon>Rhodopseudomonas</taxon>
    </lineage>
</organism>
<feature type="chain" id="PRO_0000284295" description="Endoribonuclease YbeY">
    <location>
        <begin position="1"/>
        <end position="195"/>
    </location>
</feature>
<feature type="binding site" evidence="1">
    <location>
        <position position="152"/>
    </location>
    <ligand>
        <name>Zn(2+)</name>
        <dbReference type="ChEBI" id="CHEBI:29105"/>
        <note>catalytic</note>
    </ligand>
</feature>
<feature type="binding site" evidence="1">
    <location>
        <position position="156"/>
    </location>
    <ligand>
        <name>Zn(2+)</name>
        <dbReference type="ChEBI" id="CHEBI:29105"/>
        <note>catalytic</note>
    </ligand>
</feature>
<feature type="binding site" evidence="1">
    <location>
        <position position="162"/>
    </location>
    <ligand>
        <name>Zn(2+)</name>
        <dbReference type="ChEBI" id="CHEBI:29105"/>
        <note>catalytic</note>
    </ligand>
</feature>
<name>YBEY_RHOP2</name>